<name>YESL_BACSU</name>
<feature type="chain" id="PRO_0000360529" description="Uncharacterized protein YesL">
    <location>
        <begin position="1"/>
        <end position="209"/>
    </location>
</feature>
<feature type="transmembrane region" description="Helical" evidence="1">
    <location>
        <begin position="21"/>
        <end position="41"/>
    </location>
</feature>
<feature type="transmembrane region" description="Helical" evidence="1">
    <location>
        <begin position="81"/>
        <end position="101"/>
    </location>
</feature>
<feature type="transmembrane region" description="Helical" evidence="1">
    <location>
        <begin position="107"/>
        <end position="127"/>
    </location>
</feature>
<feature type="transmembrane region" description="Helical" evidence="1">
    <location>
        <begin position="159"/>
        <end position="179"/>
    </location>
</feature>
<sequence length="209" mass="23436">MLMIHSVANGLNHFCTWVMRLAYLNVLWILFSLAGLVVFGLMPATAAMFTVAREWAKGNTDAPVFSVFFRTFKKEWRASQILGLIVVTAALFLFADMRIAAQMDQPVLVNVFVSISLIFAFVVLYVFPVFSHFDVKIREVLSISFFIAFSRPAVTLLMAAGAVGVLCLVLFHVTFLLFFSGSLLSLILTKLSFKAFRSMDQRQEKEKAA</sequence>
<protein>
    <recommendedName>
        <fullName>Uncharacterized protein YesL</fullName>
    </recommendedName>
</protein>
<reference key="1">
    <citation type="journal article" date="1997" name="Nature">
        <title>The complete genome sequence of the Gram-positive bacterium Bacillus subtilis.</title>
        <authorList>
            <person name="Kunst F."/>
            <person name="Ogasawara N."/>
            <person name="Moszer I."/>
            <person name="Albertini A.M."/>
            <person name="Alloni G."/>
            <person name="Azevedo V."/>
            <person name="Bertero M.G."/>
            <person name="Bessieres P."/>
            <person name="Bolotin A."/>
            <person name="Borchert S."/>
            <person name="Borriss R."/>
            <person name="Boursier L."/>
            <person name="Brans A."/>
            <person name="Braun M."/>
            <person name="Brignell S.C."/>
            <person name="Bron S."/>
            <person name="Brouillet S."/>
            <person name="Bruschi C.V."/>
            <person name="Caldwell B."/>
            <person name="Capuano V."/>
            <person name="Carter N.M."/>
            <person name="Choi S.-K."/>
            <person name="Codani J.-J."/>
            <person name="Connerton I.F."/>
            <person name="Cummings N.J."/>
            <person name="Daniel R.A."/>
            <person name="Denizot F."/>
            <person name="Devine K.M."/>
            <person name="Duesterhoeft A."/>
            <person name="Ehrlich S.D."/>
            <person name="Emmerson P.T."/>
            <person name="Entian K.-D."/>
            <person name="Errington J."/>
            <person name="Fabret C."/>
            <person name="Ferrari E."/>
            <person name="Foulger D."/>
            <person name="Fritz C."/>
            <person name="Fujita M."/>
            <person name="Fujita Y."/>
            <person name="Fuma S."/>
            <person name="Galizzi A."/>
            <person name="Galleron N."/>
            <person name="Ghim S.-Y."/>
            <person name="Glaser P."/>
            <person name="Goffeau A."/>
            <person name="Golightly E.J."/>
            <person name="Grandi G."/>
            <person name="Guiseppi G."/>
            <person name="Guy B.J."/>
            <person name="Haga K."/>
            <person name="Haiech J."/>
            <person name="Harwood C.R."/>
            <person name="Henaut A."/>
            <person name="Hilbert H."/>
            <person name="Holsappel S."/>
            <person name="Hosono S."/>
            <person name="Hullo M.-F."/>
            <person name="Itaya M."/>
            <person name="Jones L.-M."/>
            <person name="Joris B."/>
            <person name="Karamata D."/>
            <person name="Kasahara Y."/>
            <person name="Klaerr-Blanchard M."/>
            <person name="Klein C."/>
            <person name="Kobayashi Y."/>
            <person name="Koetter P."/>
            <person name="Koningstein G."/>
            <person name="Krogh S."/>
            <person name="Kumano M."/>
            <person name="Kurita K."/>
            <person name="Lapidus A."/>
            <person name="Lardinois S."/>
            <person name="Lauber J."/>
            <person name="Lazarevic V."/>
            <person name="Lee S.-M."/>
            <person name="Levine A."/>
            <person name="Liu H."/>
            <person name="Masuda S."/>
            <person name="Mauel C."/>
            <person name="Medigue C."/>
            <person name="Medina N."/>
            <person name="Mellado R.P."/>
            <person name="Mizuno M."/>
            <person name="Moestl D."/>
            <person name="Nakai S."/>
            <person name="Noback M."/>
            <person name="Noone D."/>
            <person name="O'Reilly M."/>
            <person name="Ogawa K."/>
            <person name="Ogiwara A."/>
            <person name="Oudega B."/>
            <person name="Park S.-H."/>
            <person name="Parro V."/>
            <person name="Pohl T.M."/>
            <person name="Portetelle D."/>
            <person name="Porwollik S."/>
            <person name="Prescott A.M."/>
            <person name="Presecan E."/>
            <person name="Pujic P."/>
            <person name="Purnelle B."/>
            <person name="Rapoport G."/>
            <person name="Rey M."/>
            <person name="Reynolds S."/>
            <person name="Rieger M."/>
            <person name="Rivolta C."/>
            <person name="Rocha E."/>
            <person name="Roche B."/>
            <person name="Rose M."/>
            <person name="Sadaie Y."/>
            <person name="Sato T."/>
            <person name="Scanlan E."/>
            <person name="Schleich S."/>
            <person name="Schroeter R."/>
            <person name="Scoffone F."/>
            <person name="Sekiguchi J."/>
            <person name="Sekowska A."/>
            <person name="Seror S.J."/>
            <person name="Serror P."/>
            <person name="Shin B.-S."/>
            <person name="Soldo B."/>
            <person name="Sorokin A."/>
            <person name="Tacconi E."/>
            <person name="Takagi T."/>
            <person name="Takahashi H."/>
            <person name="Takemaru K."/>
            <person name="Takeuchi M."/>
            <person name="Tamakoshi A."/>
            <person name="Tanaka T."/>
            <person name="Terpstra P."/>
            <person name="Tognoni A."/>
            <person name="Tosato V."/>
            <person name="Uchiyama S."/>
            <person name="Vandenbol M."/>
            <person name="Vannier F."/>
            <person name="Vassarotti A."/>
            <person name="Viari A."/>
            <person name="Wambutt R."/>
            <person name="Wedler E."/>
            <person name="Wedler H."/>
            <person name="Weitzenegger T."/>
            <person name="Winters P."/>
            <person name="Wipat A."/>
            <person name="Yamamoto H."/>
            <person name="Yamane K."/>
            <person name="Yasumoto K."/>
            <person name="Yata K."/>
            <person name="Yoshida K."/>
            <person name="Yoshikawa H.-F."/>
            <person name="Zumstein E."/>
            <person name="Yoshikawa H."/>
            <person name="Danchin A."/>
        </authorList>
    </citation>
    <scope>NUCLEOTIDE SEQUENCE [LARGE SCALE GENOMIC DNA]</scope>
    <source>
        <strain>168</strain>
    </source>
</reference>
<keyword id="KW-1003">Cell membrane</keyword>
<keyword id="KW-0472">Membrane</keyword>
<keyword id="KW-1185">Reference proteome</keyword>
<keyword id="KW-0812">Transmembrane</keyword>
<keyword id="KW-1133">Transmembrane helix</keyword>
<organism>
    <name type="scientific">Bacillus subtilis (strain 168)</name>
    <dbReference type="NCBI Taxonomy" id="224308"/>
    <lineage>
        <taxon>Bacteria</taxon>
        <taxon>Bacillati</taxon>
        <taxon>Bacillota</taxon>
        <taxon>Bacilli</taxon>
        <taxon>Bacillales</taxon>
        <taxon>Bacillaceae</taxon>
        <taxon>Bacillus</taxon>
    </lineage>
</organism>
<gene>
    <name type="primary">yesL</name>
    <name type="ordered locus">BSU06940</name>
</gene>
<comment type="subcellular location">
    <subcellularLocation>
        <location evidence="2">Cell membrane</location>
        <topology evidence="2">Multi-pass membrane protein</topology>
    </subcellularLocation>
</comment>
<proteinExistence type="predicted"/>
<accession>O31515</accession>
<dbReference type="EMBL" id="AL009126">
    <property type="protein sequence ID" value="CAB12513.1"/>
    <property type="molecule type" value="Genomic_DNA"/>
</dbReference>
<dbReference type="PIR" id="C69796">
    <property type="entry name" value="C69796"/>
</dbReference>
<dbReference type="RefSeq" id="NP_388575.1">
    <property type="nucleotide sequence ID" value="NC_000964.3"/>
</dbReference>
<dbReference type="RefSeq" id="WP_010886435.1">
    <property type="nucleotide sequence ID" value="NZ_OZ025638.1"/>
</dbReference>
<dbReference type="FunCoup" id="O31515">
    <property type="interactions" value="45"/>
</dbReference>
<dbReference type="STRING" id="224308.BSU06940"/>
<dbReference type="PaxDb" id="224308-BSU06940"/>
<dbReference type="EnsemblBacteria" id="CAB12513">
    <property type="protein sequence ID" value="CAB12513"/>
    <property type="gene ID" value="BSU_06940"/>
</dbReference>
<dbReference type="GeneID" id="938754"/>
<dbReference type="KEGG" id="bsu:BSU06940"/>
<dbReference type="PATRIC" id="fig|224308.43.peg.732"/>
<dbReference type="eggNOG" id="COG5578">
    <property type="taxonomic scope" value="Bacteria"/>
</dbReference>
<dbReference type="InParanoid" id="O31515"/>
<dbReference type="OrthoDB" id="2182676at2"/>
<dbReference type="PhylomeDB" id="O31515"/>
<dbReference type="BioCyc" id="BSUB:BSU06940-MONOMER"/>
<dbReference type="Proteomes" id="UP000001570">
    <property type="component" value="Chromosome"/>
</dbReference>
<dbReference type="GO" id="GO:0005886">
    <property type="term" value="C:plasma membrane"/>
    <property type="evidence" value="ECO:0007669"/>
    <property type="project" value="UniProtKB-SubCell"/>
</dbReference>
<dbReference type="InterPro" id="IPR006938">
    <property type="entry name" value="DUF624"/>
</dbReference>
<dbReference type="Pfam" id="PF04854">
    <property type="entry name" value="DUF624"/>
    <property type="match status" value="1"/>
</dbReference>
<evidence type="ECO:0000255" key="1"/>
<evidence type="ECO:0000305" key="2"/>